<feature type="chain" id="PRO_0000290543" description="1-(5-phosphoribosyl)-5-[(5-phosphoribosylamino)methylideneamino] imidazole-4-carboxamide isomerase 1">
    <location>
        <begin position="1"/>
        <end position="247"/>
    </location>
</feature>
<feature type="active site" description="Proton acceptor" evidence="1">
    <location>
        <position position="8"/>
    </location>
</feature>
<feature type="active site" description="Proton donor" evidence="1">
    <location>
        <position position="128"/>
    </location>
</feature>
<comment type="catalytic activity">
    <reaction evidence="1">
        <text>1-(5-phospho-beta-D-ribosyl)-5-[(5-phospho-beta-D-ribosylamino)methylideneamino]imidazole-4-carboxamide = 5-[(5-phospho-1-deoxy-D-ribulos-1-ylimino)methylamino]-1-(5-phospho-beta-D-ribosyl)imidazole-4-carboxamide</text>
        <dbReference type="Rhea" id="RHEA:15469"/>
        <dbReference type="ChEBI" id="CHEBI:58435"/>
        <dbReference type="ChEBI" id="CHEBI:58525"/>
        <dbReference type="EC" id="5.3.1.16"/>
    </reaction>
</comment>
<comment type="pathway">
    <text evidence="1">Amino-acid biosynthesis; L-histidine biosynthesis; L-histidine from 5-phospho-alpha-D-ribose 1-diphosphate: step 4/9.</text>
</comment>
<comment type="subcellular location">
    <subcellularLocation>
        <location evidence="1">Cytoplasm</location>
    </subcellularLocation>
</comment>
<comment type="similarity">
    <text evidence="1">Belongs to the HisA/HisF family.</text>
</comment>
<sequence>MMIYPTMELLDGRCVTLDKGNLDAPMIWHVDPVETAKGFAEAGAEWMHLTDFNALQGDSSNQDLVEELIRTAGLPIQLGGGIRSREQAEFWIEKGVGRVVIGTMAAYDPAAVAELAKYYPDQVVLAVDVWQGQVMTEGWRKSGAWTPEAFVKAFGNAPFAGILVTDIDSDMSDLDAQLGLISGLAEQAHSPVIASGVVRSKDDISRLKYLPNISGALVGRALFNKTITLEEAMETAQPNPEPVAEFL</sequence>
<reference key="1">
    <citation type="submission" date="2006-05" db="EMBL/GenBank/DDBJ databases">
        <title>Complete sequence of chromosome of Silicibacter sp. TM1040.</title>
        <authorList>
            <consortium name="US DOE Joint Genome Institute"/>
            <person name="Copeland A."/>
            <person name="Lucas S."/>
            <person name="Lapidus A."/>
            <person name="Barry K."/>
            <person name="Detter J.C."/>
            <person name="Glavina del Rio T."/>
            <person name="Hammon N."/>
            <person name="Israni S."/>
            <person name="Dalin E."/>
            <person name="Tice H."/>
            <person name="Pitluck S."/>
            <person name="Brettin T."/>
            <person name="Bruce D."/>
            <person name="Han C."/>
            <person name="Tapia R."/>
            <person name="Goodwin L."/>
            <person name="Thompson L.S."/>
            <person name="Gilna P."/>
            <person name="Schmutz J."/>
            <person name="Larimer F."/>
            <person name="Land M."/>
            <person name="Hauser L."/>
            <person name="Kyrpides N."/>
            <person name="Kim E."/>
            <person name="Belas R."/>
            <person name="Moran M.A."/>
            <person name="Buchan A."/>
            <person name="Gonzalez J.M."/>
            <person name="Schell M.A."/>
            <person name="Sun F."/>
            <person name="Richardson P."/>
        </authorList>
    </citation>
    <scope>NUCLEOTIDE SEQUENCE [LARGE SCALE GENOMIC DNA]</scope>
    <source>
        <strain>TM1040</strain>
    </source>
</reference>
<organism>
    <name type="scientific">Ruegeria sp. (strain TM1040)</name>
    <name type="common">Silicibacter sp.</name>
    <dbReference type="NCBI Taxonomy" id="292414"/>
    <lineage>
        <taxon>Bacteria</taxon>
        <taxon>Pseudomonadati</taxon>
        <taxon>Pseudomonadota</taxon>
        <taxon>Alphaproteobacteria</taxon>
        <taxon>Rhodobacterales</taxon>
        <taxon>Roseobacteraceae</taxon>
        <taxon>Ruegeria</taxon>
    </lineage>
</organism>
<evidence type="ECO:0000255" key="1">
    <source>
        <dbReference type="HAMAP-Rule" id="MF_01014"/>
    </source>
</evidence>
<protein>
    <recommendedName>
        <fullName evidence="1">1-(5-phosphoribosyl)-5-[(5-phosphoribosylamino)methylideneamino] imidazole-4-carboxamide isomerase 1</fullName>
        <ecNumber evidence="1">5.3.1.16</ecNumber>
    </recommendedName>
    <alternativeName>
        <fullName evidence="1">Phosphoribosylformimino-5-aminoimidazole carboxamide ribotide isomerase 1</fullName>
    </alternativeName>
</protein>
<gene>
    <name evidence="1" type="primary">hisA1</name>
    <name type="ordered locus">TM1040_1053</name>
</gene>
<dbReference type="EC" id="5.3.1.16" evidence="1"/>
<dbReference type="EMBL" id="CP000377">
    <property type="protein sequence ID" value="ABF63786.1"/>
    <property type="molecule type" value="Genomic_DNA"/>
</dbReference>
<dbReference type="RefSeq" id="WP_011538393.1">
    <property type="nucleotide sequence ID" value="NC_008044.1"/>
</dbReference>
<dbReference type="SMR" id="Q1GHT0"/>
<dbReference type="STRING" id="292414.TM1040_1053"/>
<dbReference type="KEGG" id="sit:TM1040_1053"/>
<dbReference type="eggNOG" id="COG0106">
    <property type="taxonomic scope" value="Bacteria"/>
</dbReference>
<dbReference type="HOGENOM" id="CLU_048577_1_1_5"/>
<dbReference type="OrthoDB" id="9807749at2"/>
<dbReference type="UniPathway" id="UPA00031">
    <property type="reaction ID" value="UER00009"/>
</dbReference>
<dbReference type="Proteomes" id="UP000000636">
    <property type="component" value="Chromosome"/>
</dbReference>
<dbReference type="GO" id="GO:0005737">
    <property type="term" value="C:cytoplasm"/>
    <property type="evidence" value="ECO:0007669"/>
    <property type="project" value="UniProtKB-SubCell"/>
</dbReference>
<dbReference type="GO" id="GO:0003949">
    <property type="term" value="F:1-(5-phosphoribosyl)-5-[(5-phosphoribosylamino)methylideneamino]imidazole-4-carboxamide isomerase activity"/>
    <property type="evidence" value="ECO:0007669"/>
    <property type="project" value="UniProtKB-UniRule"/>
</dbReference>
<dbReference type="GO" id="GO:0000105">
    <property type="term" value="P:L-histidine biosynthetic process"/>
    <property type="evidence" value="ECO:0007669"/>
    <property type="project" value="UniProtKB-UniRule"/>
</dbReference>
<dbReference type="GO" id="GO:0000162">
    <property type="term" value="P:L-tryptophan biosynthetic process"/>
    <property type="evidence" value="ECO:0007669"/>
    <property type="project" value="TreeGrafter"/>
</dbReference>
<dbReference type="CDD" id="cd04732">
    <property type="entry name" value="HisA"/>
    <property type="match status" value="1"/>
</dbReference>
<dbReference type="FunFam" id="3.20.20.70:FF:000009">
    <property type="entry name" value="1-(5-phosphoribosyl)-5-[(5-phosphoribosylamino)methylideneamino] imidazole-4-carboxamide isomerase"/>
    <property type="match status" value="1"/>
</dbReference>
<dbReference type="Gene3D" id="3.20.20.70">
    <property type="entry name" value="Aldolase class I"/>
    <property type="match status" value="1"/>
</dbReference>
<dbReference type="HAMAP" id="MF_01014">
    <property type="entry name" value="HisA"/>
    <property type="match status" value="1"/>
</dbReference>
<dbReference type="InterPro" id="IPR013785">
    <property type="entry name" value="Aldolase_TIM"/>
</dbReference>
<dbReference type="InterPro" id="IPR006062">
    <property type="entry name" value="His_biosynth"/>
</dbReference>
<dbReference type="InterPro" id="IPR044524">
    <property type="entry name" value="Isoase_HisA-like"/>
</dbReference>
<dbReference type="InterPro" id="IPR023016">
    <property type="entry name" value="Isoase_HisA-like_bact"/>
</dbReference>
<dbReference type="InterPro" id="IPR011060">
    <property type="entry name" value="RibuloseP-bd_barrel"/>
</dbReference>
<dbReference type="PANTHER" id="PTHR43090">
    <property type="entry name" value="1-(5-PHOSPHORIBOSYL)-5-[(5-PHOSPHORIBOSYLAMINO)METHYLIDENEAMINO] IMIDAZOLE-4-CARBOXAMIDE ISOMERASE"/>
    <property type="match status" value="1"/>
</dbReference>
<dbReference type="PANTHER" id="PTHR43090:SF2">
    <property type="entry name" value="1-(5-PHOSPHORIBOSYL)-5-[(5-PHOSPHORIBOSYLAMINO)METHYLIDENEAMINO] IMIDAZOLE-4-CARBOXAMIDE ISOMERASE"/>
    <property type="match status" value="1"/>
</dbReference>
<dbReference type="Pfam" id="PF00977">
    <property type="entry name" value="His_biosynth"/>
    <property type="match status" value="1"/>
</dbReference>
<dbReference type="SUPFAM" id="SSF51366">
    <property type="entry name" value="Ribulose-phoshate binding barrel"/>
    <property type="match status" value="1"/>
</dbReference>
<accession>Q1GHT0</accession>
<proteinExistence type="inferred from homology"/>
<keyword id="KW-0028">Amino-acid biosynthesis</keyword>
<keyword id="KW-0963">Cytoplasm</keyword>
<keyword id="KW-0368">Histidine biosynthesis</keyword>
<keyword id="KW-0413">Isomerase</keyword>
<keyword id="KW-1185">Reference proteome</keyword>
<name>HIS41_RUEST</name>